<name>DNLI_METM6</name>
<keyword id="KW-0067">ATP-binding</keyword>
<keyword id="KW-0131">Cell cycle</keyword>
<keyword id="KW-0132">Cell division</keyword>
<keyword id="KW-0227">DNA damage</keyword>
<keyword id="KW-0233">DNA recombination</keyword>
<keyword id="KW-0234">DNA repair</keyword>
<keyword id="KW-0235">DNA replication</keyword>
<keyword id="KW-0436">Ligase</keyword>
<keyword id="KW-0460">Magnesium</keyword>
<keyword id="KW-0479">Metal-binding</keyword>
<keyword id="KW-0547">Nucleotide-binding</keyword>
<reference key="1">
    <citation type="submission" date="2007-10" db="EMBL/GenBank/DDBJ databases">
        <title>Complete sequence of Methanococcus maripaludis C6.</title>
        <authorList>
            <consortium name="US DOE Joint Genome Institute"/>
            <person name="Copeland A."/>
            <person name="Lucas S."/>
            <person name="Lapidus A."/>
            <person name="Barry K."/>
            <person name="Glavina del Rio T."/>
            <person name="Dalin E."/>
            <person name="Tice H."/>
            <person name="Pitluck S."/>
            <person name="Clum A."/>
            <person name="Schmutz J."/>
            <person name="Larimer F."/>
            <person name="Land M."/>
            <person name="Hauser L."/>
            <person name="Kyrpides N."/>
            <person name="Mikhailova N."/>
            <person name="Sieprawska-Lupa M."/>
            <person name="Whitman W.B."/>
            <person name="Richardson P."/>
        </authorList>
    </citation>
    <scope>NUCLEOTIDE SEQUENCE [LARGE SCALE GENOMIC DNA]</scope>
    <source>
        <strain>C6 / ATCC BAA-1332</strain>
    </source>
</reference>
<feature type="chain" id="PRO_0000365252" description="DNA ligase">
    <location>
        <begin position="1"/>
        <end position="573"/>
    </location>
</feature>
<feature type="active site" description="N6-AMP-lysine intermediate" evidence="1">
    <location>
        <position position="252"/>
    </location>
</feature>
<feature type="binding site" evidence="1">
    <location>
        <position position="250"/>
    </location>
    <ligand>
        <name>ATP</name>
        <dbReference type="ChEBI" id="CHEBI:30616"/>
    </ligand>
</feature>
<feature type="binding site" evidence="1">
    <location>
        <position position="257"/>
    </location>
    <ligand>
        <name>ATP</name>
        <dbReference type="ChEBI" id="CHEBI:30616"/>
    </ligand>
</feature>
<feature type="binding site" evidence="1">
    <location>
        <position position="272"/>
    </location>
    <ligand>
        <name>ATP</name>
        <dbReference type="ChEBI" id="CHEBI:30616"/>
    </ligand>
</feature>
<feature type="binding site" evidence="1">
    <location>
        <position position="301"/>
    </location>
    <ligand>
        <name>ATP</name>
        <dbReference type="ChEBI" id="CHEBI:30616"/>
    </ligand>
</feature>
<feature type="binding site" evidence="1">
    <location>
        <position position="342"/>
    </location>
    <ligand>
        <name>ATP</name>
        <dbReference type="ChEBI" id="CHEBI:30616"/>
    </ligand>
</feature>
<feature type="binding site" evidence="1">
    <location>
        <position position="432"/>
    </location>
    <ligand>
        <name>ATP</name>
        <dbReference type="ChEBI" id="CHEBI:30616"/>
    </ligand>
</feature>
<feature type="binding site" evidence="1">
    <location>
        <position position="438"/>
    </location>
    <ligand>
        <name>ATP</name>
        <dbReference type="ChEBI" id="CHEBI:30616"/>
    </ligand>
</feature>
<organism>
    <name type="scientific">Methanococcus maripaludis (strain C6 / ATCC BAA-1332)</name>
    <dbReference type="NCBI Taxonomy" id="444158"/>
    <lineage>
        <taxon>Archaea</taxon>
        <taxon>Methanobacteriati</taxon>
        <taxon>Methanobacteriota</taxon>
        <taxon>Methanomada group</taxon>
        <taxon>Methanococci</taxon>
        <taxon>Methanococcales</taxon>
        <taxon>Methanococcaceae</taxon>
        <taxon>Methanococcus</taxon>
    </lineage>
</organism>
<gene>
    <name evidence="1" type="primary">lig</name>
    <name type="ordered locus">MmarC6_1685</name>
</gene>
<evidence type="ECO:0000255" key="1">
    <source>
        <dbReference type="HAMAP-Rule" id="MF_00407"/>
    </source>
</evidence>
<dbReference type="EC" id="6.5.1.1" evidence="1"/>
<dbReference type="EMBL" id="CP000867">
    <property type="protein sequence ID" value="ABX02497.1"/>
    <property type="molecule type" value="Genomic_DNA"/>
</dbReference>
<dbReference type="SMR" id="A9AAX4"/>
<dbReference type="STRING" id="444158.MmarC6_1685"/>
<dbReference type="KEGG" id="mmx:MmarC6_1685"/>
<dbReference type="eggNOG" id="arCOG01347">
    <property type="taxonomic scope" value="Archaea"/>
</dbReference>
<dbReference type="HOGENOM" id="CLU_005138_6_0_2"/>
<dbReference type="OrthoDB" id="31274at2157"/>
<dbReference type="PhylomeDB" id="A9AAX4"/>
<dbReference type="GO" id="GO:0005524">
    <property type="term" value="F:ATP binding"/>
    <property type="evidence" value="ECO:0007669"/>
    <property type="project" value="UniProtKB-UniRule"/>
</dbReference>
<dbReference type="GO" id="GO:0003677">
    <property type="term" value="F:DNA binding"/>
    <property type="evidence" value="ECO:0007669"/>
    <property type="project" value="InterPro"/>
</dbReference>
<dbReference type="GO" id="GO:0003910">
    <property type="term" value="F:DNA ligase (ATP) activity"/>
    <property type="evidence" value="ECO:0007669"/>
    <property type="project" value="UniProtKB-UniRule"/>
</dbReference>
<dbReference type="GO" id="GO:0046872">
    <property type="term" value="F:metal ion binding"/>
    <property type="evidence" value="ECO:0007669"/>
    <property type="project" value="UniProtKB-KW"/>
</dbReference>
<dbReference type="GO" id="GO:0051301">
    <property type="term" value="P:cell division"/>
    <property type="evidence" value="ECO:0007669"/>
    <property type="project" value="UniProtKB-KW"/>
</dbReference>
<dbReference type="GO" id="GO:0071897">
    <property type="term" value="P:DNA biosynthetic process"/>
    <property type="evidence" value="ECO:0007669"/>
    <property type="project" value="InterPro"/>
</dbReference>
<dbReference type="GO" id="GO:0006310">
    <property type="term" value="P:DNA recombination"/>
    <property type="evidence" value="ECO:0007669"/>
    <property type="project" value="UniProtKB-UniRule"/>
</dbReference>
<dbReference type="GO" id="GO:0006281">
    <property type="term" value="P:DNA repair"/>
    <property type="evidence" value="ECO:0007669"/>
    <property type="project" value="UniProtKB-UniRule"/>
</dbReference>
<dbReference type="GO" id="GO:0006273">
    <property type="term" value="P:lagging strand elongation"/>
    <property type="evidence" value="ECO:0007669"/>
    <property type="project" value="TreeGrafter"/>
</dbReference>
<dbReference type="CDD" id="cd07901">
    <property type="entry name" value="Adenylation_DNA_ligase_Arch_LigB"/>
    <property type="match status" value="1"/>
</dbReference>
<dbReference type="FunFam" id="1.10.3260.10:FF:000007">
    <property type="entry name" value="DNA ligase"/>
    <property type="match status" value="1"/>
</dbReference>
<dbReference type="Gene3D" id="1.10.3260.10">
    <property type="entry name" value="DNA ligase, ATP-dependent, N-terminal domain"/>
    <property type="match status" value="1"/>
</dbReference>
<dbReference type="Gene3D" id="3.30.470.30">
    <property type="entry name" value="DNA ligase/mRNA capping enzyme"/>
    <property type="match status" value="1"/>
</dbReference>
<dbReference type="Gene3D" id="2.40.50.140">
    <property type="entry name" value="Nucleic acid-binding proteins"/>
    <property type="match status" value="1"/>
</dbReference>
<dbReference type="HAMAP" id="MF_00407">
    <property type="entry name" value="DNA_ligase"/>
    <property type="match status" value="1"/>
</dbReference>
<dbReference type="InterPro" id="IPR050191">
    <property type="entry name" value="ATP-dep_DNA_ligase"/>
</dbReference>
<dbReference type="InterPro" id="IPR022865">
    <property type="entry name" value="DNA_ligae_ATP-dep_bac/arc"/>
</dbReference>
<dbReference type="InterPro" id="IPR000977">
    <property type="entry name" value="DNA_ligase_ATP-dep"/>
</dbReference>
<dbReference type="InterPro" id="IPR012309">
    <property type="entry name" value="DNA_ligase_ATP-dep_C"/>
</dbReference>
<dbReference type="InterPro" id="IPR012310">
    <property type="entry name" value="DNA_ligase_ATP-dep_cent"/>
</dbReference>
<dbReference type="InterPro" id="IPR016059">
    <property type="entry name" value="DNA_ligase_ATP-dep_CS"/>
</dbReference>
<dbReference type="InterPro" id="IPR012308">
    <property type="entry name" value="DNA_ligase_ATP-dep_N"/>
</dbReference>
<dbReference type="InterPro" id="IPR036599">
    <property type="entry name" value="DNA_ligase_N_sf"/>
</dbReference>
<dbReference type="InterPro" id="IPR012340">
    <property type="entry name" value="NA-bd_OB-fold"/>
</dbReference>
<dbReference type="NCBIfam" id="TIGR00574">
    <property type="entry name" value="dnl1"/>
    <property type="match status" value="1"/>
</dbReference>
<dbReference type="PANTHER" id="PTHR45674:SF7">
    <property type="entry name" value="DNA LIGASE"/>
    <property type="match status" value="1"/>
</dbReference>
<dbReference type="PANTHER" id="PTHR45674">
    <property type="entry name" value="DNA LIGASE 1/3 FAMILY MEMBER"/>
    <property type="match status" value="1"/>
</dbReference>
<dbReference type="Pfam" id="PF04679">
    <property type="entry name" value="DNA_ligase_A_C"/>
    <property type="match status" value="1"/>
</dbReference>
<dbReference type="Pfam" id="PF01068">
    <property type="entry name" value="DNA_ligase_A_M"/>
    <property type="match status" value="1"/>
</dbReference>
<dbReference type="Pfam" id="PF04675">
    <property type="entry name" value="DNA_ligase_A_N"/>
    <property type="match status" value="1"/>
</dbReference>
<dbReference type="SUPFAM" id="SSF117018">
    <property type="entry name" value="ATP-dependent DNA ligase DNA-binding domain"/>
    <property type="match status" value="1"/>
</dbReference>
<dbReference type="SUPFAM" id="SSF56091">
    <property type="entry name" value="DNA ligase/mRNA capping enzyme, catalytic domain"/>
    <property type="match status" value="1"/>
</dbReference>
<dbReference type="SUPFAM" id="SSF50249">
    <property type="entry name" value="Nucleic acid-binding proteins"/>
    <property type="match status" value="1"/>
</dbReference>
<dbReference type="PROSITE" id="PS00697">
    <property type="entry name" value="DNA_LIGASE_A1"/>
    <property type="match status" value="1"/>
</dbReference>
<dbReference type="PROSITE" id="PS00333">
    <property type="entry name" value="DNA_LIGASE_A2"/>
    <property type="match status" value="1"/>
</dbReference>
<dbReference type="PROSITE" id="PS50160">
    <property type="entry name" value="DNA_LIGASE_A3"/>
    <property type="match status" value="1"/>
</dbReference>
<protein>
    <recommendedName>
        <fullName evidence="1">DNA ligase</fullName>
        <ecNumber evidence="1">6.5.1.1</ecNumber>
    </recommendedName>
    <alternativeName>
        <fullName evidence="1">Polydeoxyribonucleotide synthase [ATP]</fullName>
    </alternativeName>
</protein>
<accession>A9AAX4</accession>
<comment type="function">
    <text evidence="1">DNA ligase that seals nicks in double-stranded DNA during DNA replication, DNA recombination and DNA repair.</text>
</comment>
<comment type="catalytic activity">
    <reaction evidence="1">
        <text>ATP + (deoxyribonucleotide)n-3'-hydroxyl + 5'-phospho-(deoxyribonucleotide)m = (deoxyribonucleotide)n+m + AMP + diphosphate.</text>
        <dbReference type="EC" id="6.5.1.1"/>
    </reaction>
</comment>
<comment type="cofactor">
    <cofactor evidence="1">
        <name>Mg(2+)</name>
        <dbReference type="ChEBI" id="CHEBI:18420"/>
    </cofactor>
</comment>
<comment type="similarity">
    <text evidence="1">Belongs to the ATP-dependent DNA ligase family.</text>
</comment>
<proteinExistence type="inferred from homology"/>
<sequence length="573" mass="65774">MLFIDFCKILDKIEKTTKRLEKTDYFVELIDFIKNNGKAENLKQVSQITIGRVFAEFENKEIGIGPNLLIEAVKTTGISEKDLKAEIKKTGDIGIAVENLSSNIKQVSLFSQPLTLEEIYSTLKKLSEIEGNSSQKKKTRIISNLLILSNPVESRYISRLILEDMRIGMNIPTILASFSNYFNVNKEAVEKIYAVTNDIGLIGKKLISGSDIENDSELKLKVFRPIKPMLAQLTPSIEDAIIETKMPQFETKYDGARVQVHKSNGKVNIYSRRLENITNSVPELVEEINKIDIDNIILEGECVAMDLSSGKPRPFQDILRRFRRKYDIDKVAEKIALRIYFFDVLYYEKGLIDTPLKNRREILEKLFGTNNWDSELEKIQKEIFSNKMLFSSFKLNSDDPDLAKEFFNWSLSIGHEGIMIKNPDAPYTPGSRVKTMYKVKPTLENLDVVVTRAKIGMGKRKDWYGSYEISVKDDEDNLHVIGNVGSGLTEDDLERLTTIVNEIKIEDLGEEVILEPKIVLEVTYEEIQTSEKYEMGYALRFPRVVQIREDKSINDINTLDDVKKIYEIERNRK</sequence>